<dbReference type="EMBL" id="M59743">
    <property type="protein sequence ID" value="AAA31179.1"/>
    <property type="molecule type" value="mRNA"/>
</dbReference>
<dbReference type="PIR" id="A37113">
    <property type="entry name" value="A37113"/>
</dbReference>
<dbReference type="BMRB" id="P30957"/>
<dbReference type="EMDB" id="EMD-8303"/>
<dbReference type="SMR" id="P30957"/>
<dbReference type="FunCoup" id="P30957">
    <property type="interactions" value="184"/>
</dbReference>
<dbReference type="IntAct" id="P30957">
    <property type="interactions" value="1"/>
</dbReference>
<dbReference type="MINT" id="P30957"/>
<dbReference type="STRING" id="9986.ENSOCUP00000002126"/>
<dbReference type="iPTMnet" id="P30957"/>
<dbReference type="PaxDb" id="9986-ENSOCUP00000016860"/>
<dbReference type="eggNOG" id="KOG2243">
    <property type="taxonomic scope" value="Eukaryota"/>
</dbReference>
<dbReference type="InParanoid" id="P30957"/>
<dbReference type="Proteomes" id="UP000001811">
    <property type="component" value="Unplaced"/>
</dbReference>
<dbReference type="GO" id="GO:0034704">
    <property type="term" value="C:calcium channel complex"/>
    <property type="evidence" value="ECO:0007669"/>
    <property type="project" value="TreeGrafter"/>
</dbReference>
<dbReference type="GO" id="GO:0043231">
    <property type="term" value="C:intracellular membrane-bounded organelle"/>
    <property type="evidence" value="ECO:0000314"/>
    <property type="project" value="AgBase"/>
</dbReference>
<dbReference type="GO" id="GO:0042383">
    <property type="term" value="C:sarcolemma"/>
    <property type="evidence" value="ECO:0007669"/>
    <property type="project" value="TreeGrafter"/>
</dbReference>
<dbReference type="GO" id="GO:0033017">
    <property type="term" value="C:sarcoplasmic reticulum membrane"/>
    <property type="evidence" value="ECO:0000314"/>
    <property type="project" value="UniProtKB"/>
</dbReference>
<dbReference type="GO" id="GO:0005790">
    <property type="term" value="C:smooth endoplasmic reticulum"/>
    <property type="evidence" value="ECO:0007669"/>
    <property type="project" value="TreeGrafter"/>
</dbReference>
<dbReference type="GO" id="GO:0030018">
    <property type="term" value="C:Z disc"/>
    <property type="evidence" value="ECO:0007669"/>
    <property type="project" value="TreeGrafter"/>
</dbReference>
<dbReference type="GO" id="GO:0005262">
    <property type="term" value="F:calcium channel activity"/>
    <property type="evidence" value="ECO:0000250"/>
    <property type="project" value="UniProtKB"/>
</dbReference>
<dbReference type="GO" id="GO:0005509">
    <property type="term" value="F:calcium ion binding"/>
    <property type="evidence" value="ECO:0007669"/>
    <property type="project" value="InterPro"/>
</dbReference>
<dbReference type="GO" id="GO:0005516">
    <property type="term" value="F:calmodulin binding"/>
    <property type="evidence" value="ECO:0000250"/>
    <property type="project" value="UniProtKB"/>
</dbReference>
<dbReference type="GO" id="GO:0015278">
    <property type="term" value="F:intracellularly gated calcium channel activity"/>
    <property type="evidence" value="ECO:0000250"/>
    <property type="project" value="UniProtKB"/>
</dbReference>
<dbReference type="GO" id="GO:0005219">
    <property type="term" value="F:ryanodine-sensitive calcium-release channel activity"/>
    <property type="evidence" value="ECO:0000250"/>
    <property type="project" value="UniProtKB"/>
</dbReference>
<dbReference type="GO" id="GO:0006816">
    <property type="term" value="P:calcium ion transport"/>
    <property type="evidence" value="ECO:0000250"/>
    <property type="project" value="UniProtKB"/>
</dbReference>
<dbReference type="GO" id="GO:0019722">
    <property type="term" value="P:calcium-mediated signaling"/>
    <property type="evidence" value="ECO:0000250"/>
    <property type="project" value="UniProtKB"/>
</dbReference>
<dbReference type="GO" id="GO:0071313">
    <property type="term" value="P:cellular response to caffeine"/>
    <property type="evidence" value="ECO:0000250"/>
    <property type="project" value="UniProtKB"/>
</dbReference>
<dbReference type="GO" id="GO:0003143">
    <property type="term" value="P:embryonic heart tube morphogenesis"/>
    <property type="evidence" value="ECO:0000250"/>
    <property type="project" value="UniProtKB"/>
</dbReference>
<dbReference type="GO" id="GO:0006874">
    <property type="term" value="P:intracellular calcium ion homeostasis"/>
    <property type="evidence" value="ECO:0000250"/>
    <property type="project" value="UniProtKB"/>
</dbReference>
<dbReference type="GO" id="GO:0014808">
    <property type="term" value="P:release of sequestered calcium ion into cytosol by sarcoplasmic reticulum"/>
    <property type="evidence" value="ECO:0000250"/>
    <property type="project" value="UniProtKB"/>
</dbReference>
<dbReference type="GO" id="GO:0006941">
    <property type="term" value="P:striated muscle contraction"/>
    <property type="evidence" value="ECO:0007669"/>
    <property type="project" value="TreeGrafter"/>
</dbReference>
<dbReference type="CDD" id="cd23291">
    <property type="entry name" value="beta-trefoil_MIR_RyR2"/>
    <property type="match status" value="1"/>
</dbReference>
<dbReference type="CDD" id="cd12877">
    <property type="entry name" value="SPRY1_RyR"/>
    <property type="match status" value="1"/>
</dbReference>
<dbReference type="CDD" id="cd12878">
    <property type="entry name" value="SPRY2_RyR"/>
    <property type="match status" value="1"/>
</dbReference>
<dbReference type="CDD" id="cd12879">
    <property type="entry name" value="SPRY3_RyR"/>
    <property type="match status" value="1"/>
</dbReference>
<dbReference type="FunFam" id="1.10.238.10:FF:000040">
    <property type="entry name" value="Ryanodine receptor 2"/>
    <property type="match status" value="1"/>
</dbReference>
<dbReference type="FunFam" id="1.10.490.160:FF:000005">
    <property type="entry name" value="Ryanodine receptor 2"/>
    <property type="match status" value="1"/>
</dbReference>
<dbReference type="FunFam" id="1.10.490.160:FF:000001">
    <property type="entry name" value="Ryanodine receptor 2 (Cardiac)"/>
    <property type="match status" value="1"/>
</dbReference>
<dbReference type="FunFam" id="2.60.120.920:FF:000012">
    <property type="entry name" value="Ryanodine receptor 2 (Cardiac)"/>
    <property type="match status" value="1"/>
</dbReference>
<dbReference type="FunFam" id="2.80.10.50:FF:000006">
    <property type="entry name" value="Ryanodine receptor 2 (Cardiac)"/>
    <property type="match status" value="1"/>
</dbReference>
<dbReference type="FunFam" id="2.80.10.50:FF:000016">
    <property type="entry name" value="Ryanodine receptor 2 (Cardiac)"/>
    <property type="match status" value="1"/>
</dbReference>
<dbReference type="FunFam" id="1.10.287.70:FF:000017">
    <property type="entry name" value="ryanodine receptor isoform X2"/>
    <property type="match status" value="1"/>
</dbReference>
<dbReference type="FunFam" id="1.25.10.30:FF:000002">
    <property type="entry name" value="ryanodine receptor isoform X2"/>
    <property type="match status" value="1"/>
</dbReference>
<dbReference type="FunFam" id="2.60.120.920:FF:000002">
    <property type="entry name" value="ryanodine receptor isoform X2"/>
    <property type="match status" value="1"/>
</dbReference>
<dbReference type="FunFam" id="2.60.120.920:FF:000003">
    <property type="entry name" value="ryanodine receptor isoform X2"/>
    <property type="match status" value="1"/>
</dbReference>
<dbReference type="Gene3D" id="1.10.287.70">
    <property type="match status" value="1"/>
</dbReference>
<dbReference type="Gene3D" id="1.10.490.160">
    <property type="match status" value="3"/>
</dbReference>
<dbReference type="Gene3D" id="2.60.120.920">
    <property type="match status" value="3"/>
</dbReference>
<dbReference type="Gene3D" id="2.80.10.50">
    <property type="match status" value="2"/>
</dbReference>
<dbReference type="Gene3D" id="1.10.238.10">
    <property type="entry name" value="EF-hand"/>
    <property type="match status" value="1"/>
</dbReference>
<dbReference type="Gene3D" id="1.25.10.30">
    <property type="entry name" value="IP3 receptor type 1 binding core, RIH domain"/>
    <property type="match status" value="1"/>
</dbReference>
<dbReference type="InterPro" id="IPR001870">
    <property type="entry name" value="B30.2/SPRY"/>
</dbReference>
<dbReference type="InterPro" id="IPR043136">
    <property type="entry name" value="B30.2/SPRY_sf"/>
</dbReference>
<dbReference type="InterPro" id="IPR013320">
    <property type="entry name" value="ConA-like_dom_sf"/>
</dbReference>
<dbReference type="InterPro" id="IPR011992">
    <property type="entry name" value="EF-hand-dom_pair"/>
</dbReference>
<dbReference type="InterPro" id="IPR002048">
    <property type="entry name" value="EF_hand_dom"/>
</dbReference>
<dbReference type="InterPro" id="IPR014821">
    <property type="entry name" value="Ins145_P3_rcpt"/>
</dbReference>
<dbReference type="InterPro" id="IPR005821">
    <property type="entry name" value="Ion_trans_dom"/>
</dbReference>
<dbReference type="InterPro" id="IPR036300">
    <property type="entry name" value="MIR_dom_sf"/>
</dbReference>
<dbReference type="InterPro" id="IPR016093">
    <property type="entry name" value="MIR_motif"/>
</dbReference>
<dbReference type="InterPro" id="IPR013662">
    <property type="entry name" value="RIH_assoc-dom"/>
</dbReference>
<dbReference type="InterPro" id="IPR000699">
    <property type="entry name" value="RIH_dom"/>
</dbReference>
<dbReference type="InterPro" id="IPR013333">
    <property type="entry name" value="Ryan_recept"/>
</dbReference>
<dbReference type="InterPro" id="IPR015925">
    <property type="entry name" value="Ryanodine_IP3_receptor"/>
</dbReference>
<dbReference type="InterPro" id="IPR003032">
    <property type="entry name" value="Ryanodine_rcpt"/>
</dbReference>
<dbReference type="InterPro" id="IPR009460">
    <property type="entry name" value="Ryanrecept_TM4-6"/>
</dbReference>
<dbReference type="InterPro" id="IPR048581">
    <property type="entry name" value="RYDR_Jsol"/>
</dbReference>
<dbReference type="InterPro" id="IPR035910">
    <property type="entry name" value="RyR/IP3R_RIH_dom_sf"/>
</dbReference>
<dbReference type="InterPro" id="IPR035761">
    <property type="entry name" value="SPRY1_RyR"/>
</dbReference>
<dbReference type="InterPro" id="IPR035764">
    <property type="entry name" value="SPRY2_RyR"/>
</dbReference>
<dbReference type="InterPro" id="IPR035762">
    <property type="entry name" value="SPRY3_RyR"/>
</dbReference>
<dbReference type="InterPro" id="IPR003877">
    <property type="entry name" value="SPRY_dom"/>
</dbReference>
<dbReference type="PANTHER" id="PTHR46399">
    <property type="entry name" value="B30.2/SPRY DOMAIN-CONTAINING PROTEIN"/>
    <property type="match status" value="1"/>
</dbReference>
<dbReference type="PANTHER" id="PTHR46399:SF7">
    <property type="entry name" value="RYANODINE RECEPTOR 2"/>
    <property type="match status" value="1"/>
</dbReference>
<dbReference type="Pfam" id="PF08709">
    <property type="entry name" value="Ins145_P3_rec"/>
    <property type="match status" value="1"/>
</dbReference>
<dbReference type="Pfam" id="PF00520">
    <property type="entry name" value="Ion_trans"/>
    <property type="match status" value="1"/>
</dbReference>
<dbReference type="Pfam" id="PF02815">
    <property type="entry name" value="MIR"/>
    <property type="match status" value="1"/>
</dbReference>
<dbReference type="Pfam" id="PF08454">
    <property type="entry name" value="RIH_assoc"/>
    <property type="match status" value="1"/>
</dbReference>
<dbReference type="Pfam" id="PF06459">
    <property type="entry name" value="RR_TM4-6"/>
    <property type="match status" value="1"/>
</dbReference>
<dbReference type="Pfam" id="PF01365">
    <property type="entry name" value="RYDR_ITPR"/>
    <property type="match status" value="2"/>
</dbReference>
<dbReference type="Pfam" id="PF21119">
    <property type="entry name" value="RYDR_Jsol"/>
    <property type="match status" value="1"/>
</dbReference>
<dbReference type="Pfam" id="PF02026">
    <property type="entry name" value="RyR"/>
    <property type="match status" value="4"/>
</dbReference>
<dbReference type="Pfam" id="PF00622">
    <property type="entry name" value="SPRY"/>
    <property type="match status" value="3"/>
</dbReference>
<dbReference type="PRINTS" id="PR00795">
    <property type="entry name" value="RYANODINER"/>
</dbReference>
<dbReference type="SMART" id="SM00472">
    <property type="entry name" value="MIR"/>
    <property type="match status" value="4"/>
</dbReference>
<dbReference type="SMART" id="SM00449">
    <property type="entry name" value="SPRY"/>
    <property type="match status" value="3"/>
</dbReference>
<dbReference type="SUPFAM" id="SSF49899">
    <property type="entry name" value="Concanavalin A-like lectins/glucanases"/>
    <property type="match status" value="2"/>
</dbReference>
<dbReference type="SUPFAM" id="SSF47473">
    <property type="entry name" value="EF-hand"/>
    <property type="match status" value="1"/>
</dbReference>
<dbReference type="SUPFAM" id="SSF100909">
    <property type="entry name" value="IP3 receptor type 1 binding core, domain 2"/>
    <property type="match status" value="2"/>
</dbReference>
<dbReference type="SUPFAM" id="SSF82109">
    <property type="entry name" value="MIR domain"/>
    <property type="match status" value="2"/>
</dbReference>
<dbReference type="PROSITE" id="PS50188">
    <property type="entry name" value="B302_SPRY"/>
    <property type="match status" value="3"/>
</dbReference>
<dbReference type="PROSITE" id="PS50919">
    <property type="entry name" value="MIR"/>
    <property type="match status" value="5"/>
</dbReference>
<organism>
    <name type="scientific">Oryctolagus cuniculus</name>
    <name type="common">Rabbit</name>
    <dbReference type="NCBI Taxonomy" id="9986"/>
    <lineage>
        <taxon>Eukaryota</taxon>
        <taxon>Metazoa</taxon>
        <taxon>Chordata</taxon>
        <taxon>Craniata</taxon>
        <taxon>Vertebrata</taxon>
        <taxon>Euteleostomi</taxon>
        <taxon>Mammalia</taxon>
        <taxon>Eutheria</taxon>
        <taxon>Euarchontoglires</taxon>
        <taxon>Glires</taxon>
        <taxon>Lagomorpha</taxon>
        <taxon>Leporidae</taxon>
        <taxon>Oryctolagus</taxon>
    </lineage>
</organism>
<gene>
    <name evidence="13" type="primary">RYR2</name>
</gene>
<sequence length="4969" mass="565073">MADGGEGEDEIQFLRTDDEVVLQCTATIHKEQQKLCLAAEGFGNRLCFLESTSNSKNVPPDLSICTFVLEQSLLVRALQEMLANTVEKSEGQVDVEKWKFMMKTAQGGGHRTLLYGHAILLRHSYSGMYLCCLSTSRSSTDKLAFDVGLQEDTTGEACWWTIHPASKQRSEGEKVRVGDDLILVSVSSERYLHLSYGNGSLHVDAAFQQTLWSVAPISSGSEAAQGYLIGGDVLRLLHGHMDECLTVPSGEHGEEQRRTVHYEGGAVSVHARSLWRLETLRVAWSGSHIRWGQPFRLRHVTTGKYLSLMEDKNLLLMDKEKADVKSTAFTFRSSKEKLDGGVRKEVDGMGTSEIKYGDSICYIQHVDTGLWLTYQSVDVKSVRMGSIQRKAIMHHEGHMDDGLNLSRSQHEESRTARVIRSTVFLFNRFIRGLDALSKKAKASSVDLPIESVSLSLQDLIGYFHPPDEHLEHEDKQNRLRALKNRQNLFQEEGMINLVLECIDRLHVYSSAAHFADVAGREAGESWKSILNSLYELLAALIRGNRKNCAQFSGSLDWLISRLERLEASSGILEVLHCVLVESPEALNIIKEGHIKSIISLLDKHGRNHKVLDVLCSLCVCHGVAVRSNQHLICDNLLPGRDLLLQTRLVNHVSSMRPNIFLGVSEGSAQYKKWYYELMVDHTEPFVTAEATHLRVGWASTEGYSPYPGGGEEWGGNGVGDDLFSYGFDGLHLWSGCIARTVSSPNQHLLRTDDVISCCLDLSAPSISFRINGQPVQGMFENFNIDGLFFPVVSFSAGIKVRFLLGGRHGEFKFLPPPGYAPCYEAVLPKEKLKVEHSREYKQERTYTRDLLGPTVSLTQAAFTPIPVDTSQIVLPPHLERIREKLAENIHELWVMNKIELGWQYGPVRDDNKRQHPCLVEFSKLPEQERNYNLQMSLETLKTLLALGCHVGISDEHAEEKVKKMKLPKNYQLTSGYKPAPMDLSFIKLTPSQEAMVDKLAENAHNVWARDRIRQGWTYGIQQDVKNRRNPRLVPYTLLDDRTKKSNKDSLREAVRTLLGYGYNLEAPDQDHAARAEVCSGTGERFRIFRAEKTYAVKAGRWYFEFEAVTSGDMRVGWSRPGCQPDQELGSDERAFAFDGFKAQRWHQGNEHYGRSWQAGDVVGCMVDMNEHTMMFTLNGEILLDDSGSELAFKDFDVGDGFIPVCSLGVAQVGRMNFGKDVSTLKYFTICGLQEGYEPFAVNTNRDITMWLSKRLPQFLQVPSNHEHIEVTRIDGTIDSSPCLKVTQKSFGSQNSNTDIMFYRLSMPIECAEVFSKTVPGGLPGAGLFGPKNDLEDYDADSDFEVLMKTAHGHLVPDRVDKDKETTKAEFNNHKDYAQEKPSRLKQRFLLRRTKPDYSTSHSARLTEDVLADDRDDYDFLMQTSTYYYSVRIFPGQEPANVWVGWITSDFHQYDTGFDLDRVRTVTVTLGDEKGKVHESIKRSNCYMVCAGESMSPGQGRNNNGLEIGCVVDAASGLLTFIANGKELSTYYQVEPSTKLFPAVFAQATSPNVFQFELGRIKNVMPLSAGLFKSEHKNPVPQCPPRLHVQFLSHVLWSRMPNQFLKVDVSRISERQGWLVQCLDPLQFMSLHIPEENRSVDILELTEQEELLKFHYHTLRLYSAVCALGNHRVAHALCSHVDEPQLLYAIENKYMPGLLRTGYYDLLIDIHLSSYATARLMMNNEFIVPMTEETKSITLFPDENKKHGLPGIGLSTSLRPRMQFSSPSFVSINNECYQYSPEFPLDILKAKTIQMLTEAVKEGSLHGRDPVGGTTEFLFVPLIKLFYTLLIMGIFHNEDLRHILQLIEPSVFKDAATPEEEGDTLEEEPSVEDTKLEGAGEEEAKVGKRPKEGLLQMKLPEPVKLQMCLLLQYLCDCQVRHRIEAIVAFSDDFVAKLQDNQRFRYNEVMQALNMSAALTARKTKEFRSPPQEQINMLLNFKDDKSECPCPEEIRDQLLDFHEDLMTHCGIELDEDGSLDGNSDLTIRGRLLSLVEKVTYLKKKQTEKPVESDSRKSSTLQQLISETMVRWAQESVIEDPELVRAMFVLLHRQYDGIGGLVRALPKTYTINGVSVEDTINLLASLGQIRSLLSVRMGKEEEKLMIRGLGDIMNNKVFYQHPNLMRALGMHETVMEVMVNVLGGGESKEITFPKMVANCCRFLCYFCRISRQNQKAMFDHLSYLLENSSVGLASPAMRGSTPLDVAAASVMDNNELALALREPDLEKVVVRYLAGCGLQSCQMLVSKGYPDIGWNPVEGERYLDFLRFAVFCNGESVEENANVVVRLLIRRPECFGPALRGEGGNGLLAAMEEAIKIAEDPSRDGPSPTSGSSKTLDTEEEEDDTIHMGNAIMTFYAALIDLLGRCAPEMHLIHAGKGEAIRIRSILRSLIPLGDLVGVISIAFQMPTIAKDGNVVEPDMSAGFCPDHKAAMVLFLDRVYGIEVQDFLLHLLEVGFLPDLRAAASLDTAALSATDMALALNRYLCTAVLPLLTRCAPLFAGTEHHASLIDSLLHTVYRLSKGCSLTKAQRDSIEVCLLSICGQLRPSMMQHLLRRLVFDVPLLNEHAKMPLKLLTNHYERCWKYYCLPGGWGNFGAASEEELHLSRKLFWGIFDALSQKKYEQELFKLALPCLSAVAGALPPDYMESNYVSMMEKQSSMDSEGNFNPQPVDTSNIIIPEKLEYFINKYAEHSHDKWSMDKLANGWIYGEIYSDSSKIQPLMKPYKLLSEKEKEIYRWPIKESLKTMLAWGWRIERTREGDSMALYNRTRRISQTSQVSVDAAHGYSPRAIDMSNVTLSRDLHAMAEMMAENYHNIWAKKKKLELESKGGGNHPLLVPYDTLTAKEKAKDREKAQDILKFLQINGYAVSRGFKDLELDTPSIEKRFAYSFLQQLIRYVDEAHQYILEFDGGSRSKGEHFPYEQEIKFFAKVVLPLIDQYFKNHRLYFLSAASRPLCSGGHASNKEKEMVTSLFCKLGVLVRHRISLFGNDATSIVNCLHILGQTLDARTVMKTGLESVKSALRAFLDNAAEDLEKTMENLKQGQFTHTRNQPRGVTQIINYTTVALLPMLSSLFEHIGQHQFGEDLILEDVQVSCYRILTSLYALGTSKSIYVERQRSALGECLAAFAGAFPVAFLETHLNKHNIYSIYNTKSSRERAALSLPANVEDVCPNIPSLEKLMEEIVELAESGIRYTQMPHVMEVILPMLCSYMSRWWEHGPESNPGRAEMCCTALNSEHMNTLLGNILKIIYNNLGIDEGAWMKRLAVFSQPIINKVKPQLLKTHFLPLMEKLKKKAAMVVSEEDHLKAEARGDMSEAELLILDEFTTLARDLYAFYPLLIRFVDYNRAKWLKEPTPEAEELFRMVAEVFIYWSKSHNFKREEQNFVVQNEINNMSFLITDTKSKMSKAAVSDQERKKMKRKGDRYSMQTSLIVAALKRLLPIGLNICAPGDQELIALAKNRFSLKATEDEVRDIIRNNIHLQGKLEDPAIRWQMALYKDLPNRTEETSDPEKTVERVLDIANVLFHLEQKSKFIGRRYYNLVEHPQRSKKAVWHKLLSKQRKRAVVACFRMAPLYNLPRHRAVNLFLQGYEKSWIETEEHYFEDKLIEDLAKPGAEPPEEDEVTKRVDPLHQLILLFSRTALTEKCKLEEDFLYMAYADIMAKSCHDEEDDDGEEEVKSFEEKEMEKQKLLYQQARLHDRGAAEMVLQTISASKGETGPMVAATLKLGIAILNGGNSTVQQKMLDYLKEKKDVGFFQSLAGLMQSCSVLDLNAFERQNKAEGLGMVTEEGSGEKVLQDDEFTCDLFRFLQLLCEGHNSDFQNYLRTQTGNNTTVNIIISTVDYLLRVQESISDFYWYYSGKDVIDEQGQRNFSKAIQVAKQVFNTLTEYIQGPCTGNQQSLAHSRLWDAVVGFLHVFAHMQMKLSQDSSQIELLKELMDLQKDMVVMLLSMLEGNVVNGTIGKQMVDMLVESSNNVEMILKFFDMFLKLKDLTSSDTFKEYDPDGKGIISKRDFHKAMESHKHYTQSETEFLLSCAETDENETLDYEEFVKRFHEPAKDIGFNVAVLLTNLSEHMPNDTRLQTFLELAESVLNYFQPFLGRIEIMGSAKRIERVYFEISESSRTQWEKPQVKESKRQFIFDVVNEGGEKEKMELFVNFCEDTIFEMQLAAQISESDLNERSANKEESEKERPEEQGPKMGFFSVLTVRSALFALRYNILTLMRMLSLKSLKKQMKKMKKMTVKDMVTAFFSSYWSIFMTLLHFVASVFRGFFRIVCSLLLGGSLVEGAKKIKVAELLANMPDPTQDEVRGDGEEGERKPMETTLPSEDLTDLKELTEESDLLSDIFGLDLKREGGQYKLIPHNPNAGLSDLMSNPVLIPEEQEKFQEQKTKEEEKEEKEETKSEPEKAEGEDGEKEEKVKEDKGKQKLRQLHTHRYGEPEVPESAFWKKIIAYQQKLLNYLARNFYNMRMLALFVAFAINFILLFYKVSTSSVVEGKELPSRSTSENAKVTTSLDSSSHRIIAVHYVLEESSGYMEPTLRILAILHTVISFFCIIGYYCLKVPLVIFKREKEVARKLEFDGLYITEQPSEDDIKGQWDRLVINTQSFPNNYWDKFVKRKVMDKYGEFYGRDRISELLGMDKAALDFSDAREKKKPKKDSSLSAVLNSIDVKYQMWKLGVVFTDNSFLYLAWYMTMSILGHYNNFFFAAHLLDIAMGFKTLRTILSSVTHNGKQLVLTVGLLAVVVYLYTVVAFNFFRKFYNKSEDGDTPDMKCDDMLTCYMFHMYVGVRAGGGIGDEIEDPAGDEYEIYRIIFDITFFFFVIVILLAIIQGLIIDAFGELRDQQEQVKEDMETKCFICGIGNDYFDTVPHGFETHTLQEHNLANYLFFLMYLINKDETEHTGQESYVWKMYQERCWEFFPAGDCFRKQYEDQLN</sequence>
<keyword id="KW-0106">Calcium</keyword>
<keyword id="KW-0107">Calcium channel</keyword>
<keyword id="KW-0109">Calcium transport</keyword>
<keyword id="KW-0112">Calmodulin-binding</keyword>
<keyword id="KW-0175">Coiled coil</keyword>
<keyword id="KW-0217">Developmental protein</keyword>
<keyword id="KW-0407">Ion channel</keyword>
<keyword id="KW-0406">Ion transport</keyword>
<keyword id="KW-1071">Ligand-gated ion channel</keyword>
<keyword id="KW-0472">Membrane</keyword>
<keyword id="KW-0597">Phosphoprotein</keyword>
<keyword id="KW-0675">Receptor</keyword>
<keyword id="KW-1185">Reference proteome</keyword>
<keyword id="KW-0677">Repeat</keyword>
<keyword id="KW-0703">Sarcoplasmic reticulum</keyword>
<keyword id="KW-0812">Transmembrane</keyword>
<keyword id="KW-1133">Transmembrane helix</keyword>
<keyword id="KW-0813">Transport</keyword>
<accession>P30957</accession>
<protein>
    <recommendedName>
        <fullName evidence="5">Ryanodine receptor 2</fullName>
        <shortName>RYR-2</shortName>
        <shortName>RyR2</shortName>
    </recommendedName>
    <alternativeName>
        <fullName>Cardiac muscle ryanodine receptor</fullName>
    </alternativeName>
    <alternativeName>
        <fullName>Cardiac muscle ryanodine receptor-calcium release channel</fullName>
    </alternativeName>
    <alternativeName>
        <fullName>Cardiac muscle-type ryanodine receptor</fullName>
    </alternativeName>
    <alternativeName>
        <fullName>Type 2 ryanodine receptor</fullName>
    </alternativeName>
</protein>
<proteinExistence type="evidence at protein level"/>
<evidence type="ECO:0000250" key="1"/>
<evidence type="ECO:0000250" key="2">
    <source>
        <dbReference type="UniProtKB" id="B0LPN4"/>
    </source>
</evidence>
<evidence type="ECO:0000250" key="3">
    <source>
        <dbReference type="UniProtKB" id="E9Q401"/>
    </source>
</evidence>
<evidence type="ECO:0000250" key="4">
    <source>
        <dbReference type="UniProtKB" id="P11716"/>
    </source>
</evidence>
<evidence type="ECO:0000250" key="5">
    <source>
        <dbReference type="UniProtKB" id="Q92736"/>
    </source>
</evidence>
<evidence type="ECO:0000255" key="6"/>
<evidence type="ECO:0000255" key="7">
    <source>
        <dbReference type="PROSITE-ProRule" id="PRU00131"/>
    </source>
</evidence>
<evidence type="ECO:0000255" key="8">
    <source>
        <dbReference type="PROSITE-ProRule" id="PRU00548"/>
    </source>
</evidence>
<evidence type="ECO:0000256" key="9">
    <source>
        <dbReference type="SAM" id="MobiDB-lite"/>
    </source>
</evidence>
<evidence type="ECO:0000269" key="10">
    <source>
    </source>
</evidence>
<evidence type="ECO:0000269" key="11">
    <source>
    </source>
</evidence>
<evidence type="ECO:0000269" key="12">
    <source>
    </source>
</evidence>
<evidence type="ECO:0000303" key="13">
    <source>
    </source>
</evidence>
<evidence type="ECO:0000305" key="14"/>
<comment type="function">
    <text evidence="5 10">Cytosolic calcium-activated calcium channel that mediates the release of Ca(2+) from the sarcoplasmic reticulum into the cytosol and thereby plays a key role in triggering cardiac muscle contraction. Aberrant channel activation can lead to cardiac arrhythmia. In cardiac myocytes, calcium release is triggered by increased Ca(2+) cytosolic levels due to activation of the L-type calcium channel CACNA1C. The calcium channel activity is modulated by formation of heterotetramers with RYR3. Required for cellular calcium ion homeostasis. Required for embryonic heart development.</text>
</comment>
<comment type="catalytic activity">
    <reaction evidence="5">
        <text>Ca(2+)(in) = Ca(2+)(out)</text>
        <dbReference type="Rhea" id="RHEA:29671"/>
        <dbReference type="ChEBI" id="CHEBI:29108"/>
    </reaction>
</comment>
<comment type="activity regulation">
    <text evidence="4">The calcium release is activated by increased cytosolic calcium levels, by nitric oxyde (NO), caffeine and ATP. Channel activity is modulated by the alkaloid ryanodine that binds to the open Ca-release channel with high affinity. At low concentrations, ryanodine maintains the channel in an open conformation. High ryanodine concentrations inhibit channel activity. Channel activity is regulated by calmodulin (CALM). Channel activity is inhibited by magnesium ions, possibly by competition for calcium binding sites.</text>
</comment>
<comment type="subunit">
    <text evidence="3 5 12">Homotetramer. Can also form heterotetramers with RYR1 and RYR3. Interacts with FKBP1A and FKBP1B; these interactions may stabilize the channel in its closed state and prevent Ca(2+) leaks. Interacts with CALM and S100A1; these interactions regulate channel activity. Identified in a complex composed of RYR2, FKBP1B, PKA catalytic subunit, PRKAR2A, AKAP6, and the protein phosphatases PP2A and PP1. Interacts directly with FKBP1B, PKA, PP1 and PP2A (By similarity). Interacts with SELENON (PubMed:18713863). In cardiac muscles, identified in a complex, composed of FSD2, CMYA5 and RYR2 (By similarity). Interacts with PKD2 (via N-terminus); regulates RYR2 channel activity (By similarity).</text>
</comment>
<comment type="subcellular location">
    <subcellularLocation>
        <location evidence="12">Sarcoplasmic reticulum membrane</location>
        <topology evidence="6">Multi-pass membrane protein</topology>
    </subcellularLocation>
</comment>
<comment type="tissue specificity">
    <text>Heart and brain.</text>
</comment>
<comment type="domain">
    <text evidence="4">The calcium release channel activity resides in the C-terminal region while the remaining part of the protein resides in the cytoplasm.</text>
</comment>
<comment type="PTM">
    <text evidence="11">Channel activity is modulated by phosphorylation. Phosphorylation at Ser-2809 and Ser-2815 increases the open probability of the calcium channel. Phosphorylation is increased in failing heart, leading to calcium leaks and increased cytoplasmic Ca(2+) levels.</text>
</comment>
<comment type="PTM">
    <text evidence="1">Phosphorylation at Ser-2031 by PKA enhances the response to lumenal calcium.</text>
</comment>
<comment type="similarity">
    <text evidence="14">Belongs to the ryanodine receptor (TC 1.A.3.1) family. RYR2 subfamily.</text>
</comment>
<name>RYR2_RABIT</name>
<reference key="1">
    <citation type="journal article" date="1990" name="J. Biol. Chem.">
        <title>Molecular cloning of cDNA encoding the Ca2+ release channel (ryanodine receptor) of rabbit cardiac muscle sarcoplasmic reticulum.</title>
        <authorList>
            <person name="Otsu K."/>
            <person name="Willard H.F."/>
            <person name="Khanna V.K."/>
            <person name="Zorzato F."/>
            <person name="Green N.M."/>
            <person name="Maclennan D.H."/>
        </authorList>
    </citation>
    <scope>NUCLEOTIDE SEQUENCE [MRNA]</scope>
    <source>
        <tissue>Heart muscle</tissue>
    </source>
</reference>
<reference key="2">
    <citation type="journal article" date="1996" name="Eur. J. Biochem.">
        <title>Cloning and characterization of the 5'-upstream regulatory region of the Ca(2+)-release channel gene of cardiac sarcoplasmic reticulum.</title>
        <authorList>
            <person name="Nishida K."/>
            <person name="Otsu K."/>
            <person name="Hori M."/>
            <person name="Kuzuya T."/>
            <person name="Tada M."/>
        </authorList>
    </citation>
    <scope>NUCLEOTIDE SEQUENCE [MRNA]</scope>
</reference>
<reference key="3">
    <citation type="journal article" date="1991" name="J. Biol. Chem.">
        <title>Unique phosphorylation site on the cardiac ryanodine receptor regulates calcium channel activity.</title>
        <authorList>
            <person name="Witcher D.R."/>
            <person name="Kovacs R.J."/>
            <person name="Schulman H."/>
            <person name="Cefali D.C."/>
            <person name="Jones L.R."/>
        </authorList>
    </citation>
    <scope>PHOSPHORYLATION AT SER-2809 BY CAMK2D</scope>
</reference>
<reference key="4">
    <citation type="journal article" date="2002" name="J. Biol. Chem.">
        <title>Isoform-dependent formation of heteromeric Ca2+ release channels (ryanodine receptors).</title>
        <authorList>
            <person name="Xiao B."/>
            <person name="Masumiya H."/>
            <person name="Jiang D."/>
            <person name="Wang R."/>
            <person name="Sei Y."/>
            <person name="Zhang L."/>
            <person name="Murayama T."/>
            <person name="Ogawa Y."/>
            <person name="Lai F.A."/>
            <person name="Wagenknecht T."/>
            <person name="Chen S.R."/>
        </authorList>
    </citation>
    <scope>INTERACTION WITH RYR1 AND RYR3</scope>
    <scope>FUNCTION</scope>
</reference>
<reference key="5">
    <citation type="journal article" date="2008" name="Proc. Natl. Acad. Sci. U.S.A.">
        <title>Selenoprotein N is required for ryanodine receptor calcium release channel activity in human and zebrafish muscle.</title>
        <authorList>
            <person name="Jurynec M.J."/>
            <person name="Xia R."/>
            <person name="Mackrill J.J."/>
            <person name="Gunther D."/>
            <person name="Crawford T."/>
            <person name="Flanigan K.M."/>
            <person name="Abramson J.J."/>
            <person name="Howard M.T."/>
            <person name="Grunwald D.J."/>
        </authorList>
    </citation>
    <scope>INTERACTION WITH SELENON</scope>
    <scope>SUBCELLULAR LOCATION</scope>
</reference>
<feature type="chain" id="PRO_0000219362" description="Ryanodine receptor 2">
    <location>
        <begin position="1"/>
        <end position="4969"/>
    </location>
</feature>
<feature type="topological domain" description="Cytoplasmic" evidence="6">
    <location>
        <begin position="1"/>
        <end position="4282"/>
    </location>
</feature>
<feature type="transmembrane region" description="Helical" evidence="6">
    <location>
        <begin position="4283"/>
        <end position="4303"/>
    </location>
</feature>
<feature type="transmembrane region" description="Helical" evidence="6">
    <location>
        <begin position="4505"/>
        <end position="4525"/>
    </location>
</feature>
<feature type="transmembrane region" description="Helical" evidence="6">
    <location>
        <begin position="4582"/>
        <end position="4602"/>
    </location>
</feature>
<feature type="transmembrane region" description="Helical" evidence="6">
    <location>
        <begin position="4732"/>
        <end position="4752"/>
    </location>
</feature>
<feature type="transmembrane region" description="Helical" evidence="6">
    <location>
        <begin position="4771"/>
        <end position="4791"/>
    </location>
</feature>
<feature type="intramembrane region" description="Pore-forming" evidence="1">
    <location>
        <begin position="4822"/>
        <end position="4831"/>
    </location>
</feature>
<feature type="transmembrane region" description="Helical" evidence="6">
    <location>
        <begin position="4852"/>
        <end position="4872"/>
    </location>
</feature>
<feature type="topological domain" description="Cytoplasmic" evidence="6">
    <location>
        <begin position="4873"/>
        <end position="4969"/>
    </location>
</feature>
<feature type="domain" description="MIR 1" evidence="7">
    <location>
        <begin position="110"/>
        <end position="165"/>
    </location>
</feature>
<feature type="domain" description="MIR 2" evidence="7">
    <location>
        <begin position="172"/>
        <end position="217"/>
    </location>
</feature>
<feature type="domain" description="MIR 3" evidence="7">
    <location>
        <begin position="225"/>
        <end position="280"/>
    </location>
</feature>
<feature type="domain" description="MIR 4" evidence="7">
    <location>
        <begin position="286"/>
        <end position="345"/>
    </location>
</feature>
<feature type="domain" description="MIR 5" evidence="7">
    <location>
        <begin position="351"/>
        <end position="408"/>
    </location>
</feature>
<feature type="domain" description="B30.2/SPRY 1" evidence="8">
    <location>
        <begin position="599"/>
        <end position="809"/>
    </location>
</feature>
<feature type="repeat" description="1">
    <location>
        <begin position="853"/>
        <end position="966"/>
    </location>
</feature>
<feature type="repeat" description="2">
    <location>
        <begin position="967"/>
        <end position="1080"/>
    </location>
</feature>
<feature type="domain" description="B30.2/SPRY 2" evidence="8">
    <location>
        <begin position="1025"/>
        <end position="1222"/>
    </location>
</feature>
<feature type="domain" description="B30.2/SPRY 3" evidence="8">
    <location>
        <begin position="1357"/>
        <end position="1562"/>
    </location>
</feature>
<feature type="repeat" description="3">
    <location>
        <begin position="2693"/>
        <end position="2811"/>
    </location>
</feature>
<feature type="repeat" description="4">
    <location>
        <begin position="2813"/>
        <end position="2926"/>
    </location>
</feature>
<feature type="region of interest" description="4 X approximate repeats">
    <location>
        <begin position="853"/>
        <end position="2926"/>
    </location>
</feature>
<feature type="region of interest" description="Disordered" evidence="9">
    <location>
        <begin position="1855"/>
        <end position="1886"/>
    </location>
</feature>
<feature type="region of interest" description="Disordered" evidence="9">
    <location>
        <begin position="2355"/>
        <end position="2380"/>
    </location>
</feature>
<feature type="region of interest" description="Interaction with CALM" evidence="1">
    <location>
        <begin position="3582"/>
        <end position="3611"/>
    </location>
</feature>
<feature type="region of interest" description="Disordered" evidence="9">
    <location>
        <begin position="4211"/>
        <end position="4231"/>
    </location>
</feature>
<feature type="region of interest" description="Disordered" evidence="9">
    <location>
        <begin position="4337"/>
        <end position="4362"/>
    </location>
</feature>
<feature type="region of interest" description="Disordered" evidence="9">
    <location>
        <begin position="4419"/>
        <end position="4470"/>
    </location>
</feature>
<feature type="coiled-coil region" evidence="6">
    <location>
        <begin position="4413"/>
        <end position="4446"/>
    </location>
</feature>
<feature type="compositionally biased region" description="Acidic residues" evidence="9">
    <location>
        <begin position="1856"/>
        <end position="1870"/>
    </location>
</feature>
<feature type="compositionally biased region" description="Basic and acidic residues" evidence="9">
    <location>
        <begin position="1871"/>
        <end position="1886"/>
    </location>
</feature>
<feature type="compositionally biased region" description="Basic and acidic residues" evidence="9">
    <location>
        <begin position="4212"/>
        <end position="4231"/>
    </location>
</feature>
<feature type="compositionally biased region" description="Basic and acidic residues" evidence="9">
    <location>
        <begin position="4341"/>
        <end position="4355"/>
    </location>
</feature>
<feature type="compositionally biased region" description="Basic and acidic residues" evidence="9">
    <location>
        <begin position="4419"/>
        <end position="4460"/>
    </location>
</feature>
<feature type="modified residue" description="Phosphoserine" evidence="3">
    <location>
        <position position="1341"/>
    </location>
</feature>
<feature type="modified residue" description="Phosphoserine" evidence="2">
    <location>
        <position position="1869"/>
    </location>
</feature>
<feature type="modified residue" description="Phosphoserine; by PKA" evidence="3">
    <location>
        <position position="2031"/>
    </location>
</feature>
<feature type="modified residue" description="Phosphoserine" evidence="3">
    <location>
        <position position="2370"/>
    </location>
</feature>
<feature type="modified residue" description="Phosphoserine" evidence="2">
    <location>
        <position position="2698"/>
    </location>
</feature>
<feature type="modified residue" description="Phosphoserine" evidence="3">
    <location>
        <position position="2798"/>
    </location>
</feature>
<feature type="modified residue" description="Phosphoserine; by CaMK2D and PKA" evidence="11">
    <location>
        <position position="2809"/>
    </location>
</feature>
<feature type="modified residue" description="Phosphoserine" evidence="3">
    <location>
        <position position="2812"/>
    </location>
</feature>
<feature type="modified residue" description="Phosphoserine; by CaMK2D" evidence="5">
    <location>
        <position position="2815"/>
    </location>
</feature>
<feature type="modified residue" description="Phosphoserine" evidence="3">
    <location>
        <position position="2948"/>
    </location>
</feature>